<sequence>MEPSATPGAQPGVPTSSGEPFHLPPDYEDEFLRYLWRDYLYPKQYEWVLIAAYVAVFLIALVGNTLVCLAVWRNHHMRTVTNYFIVNLSLADVLVTAICLPASLLVDITESWLFGHALCKVIPYLQAVSVSVAVLTLSFIALDRWYAICHPLLFKSTARRARGSILGIWAVSLAVMVPQAAVMECSSVLPELANRTRLFSVCDERWADELYPKIYHSCFFFVTYLAPLGLMGMAYFQIFRKLWGPQIPGTTSALVRNWKRPSEQLEAQHQGLCTEPQPRARAFLAEVKQMRARRKTAKMLMVVLLVFALCYLPISVLNVLKRVFGMFRQASDREAVYACFTFSHWLVYANSAANPIIYNFLSGKFREQFKAAFSCCLPGLGPSSSARHKSLSLQSRCSVSKVSEHVVLTTVTTVLS</sequence>
<evidence type="ECO:0000250" key="1">
    <source>
        <dbReference type="UniProtKB" id="O43613"/>
    </source>
</evidence>
<evidence type="ECO:0000255" key="2"/>
<evidence type="ECO:0000255" key="3">
    <source>
        <dbReference type="PROSITE-ProRule" id="PRU00521"/>
    </source>
</evidence>
<evidence type="ECO:0000256" key="4">
    <source>
        <dbReference type="SAM" id="MobiDB-lite"/>
    </source>
</evidence>
<evidence type="ECO:0000269" key="5">
    <source>
    </source>
</evidence>
<evidence type="ECO:0000305" key="6">
    <source>
    </source>
</evidence>
<evidence type="ECO:0000305" key="7">
    <source>
    </source>
</evidence>
<evidence type="ECO:0000312" key="8">
    <source>
        <dbReference type="RGD" id="2787"/>
    </source>
</evidence>
<reference key="1">
    <citation type="journal article" date="1998" name="Cell">
        <title>Orexins and orexin receptors: a family of hypothalamic neuropeptides and G protein-coupled receptors that regulate feeding behavior.</title>
        <authorList>
            <person name="Sakurai T."/>
            <person name="Amemiya A."/>
            <person name="Ishii M."/>
            <person name="Matsuzaki I."/>
            <person name="Chemelli R.M."/>
            <person name="Tanaka H."/>
            <person name="Williams S.C."/>
            <person name="Richardson J.A."/>
            <person name="Kozlowski G.P."/>
            <person name="Wilson S."/>
            <person name="Arch J.R.S."/>
            <person name="Buckingham R.E."/>
            <person name="Haynes A.C."/>
            <person name="Carr S.A."/>
            <person name="Annan R.S."/>
            <person name="McNulty D.E."/>
            <person name="Liu W.-S."/>
            <person name="Terrett J.A."/>
            <person name="Elshourbagy N.A."/>
            <person name="Bergsma D.J."/>
            <person name="Yanagisawa M."/>
        </authorList>
    </citation>
    <scope>NUCLEOTIDE SEQUENCE [MRNA]</scope>
    <scope>TISSUE SPECIFICITY</scope>
    <scope>INDUCTION BY FASTING</scope>
    <source>
        <tissue>Brain</tissue>
    </source>
</reference>
<reference key="2">
    <citation type="journal article" date="2001" name="Bioessays">
        <title>Hypocretin/orexin, sleep and narcolepsy.</title>
        <authorList>
            <person name="Hungs M."/>
            <person name="Mignot E."/>
        </authorList>
    </citation>
    <scope>REVIEW</scope>
</reference>
<reference key="3">
    <citation type="journal article" date="2001" name="Annu. Rev. Neurosci.">
        <title>To eat or to sleep? Orexin in the regulation of feeding and wakefulness.</title>
        <authorList>
            <person name="Willie J.T."/>
            <person name="Chemelli R.M."/>
            <person name="Sinton C.M."/>
            <person name="Yanagisawa M."/>
        </authorList>
    </citation>
    <scope>REVIEW</scope>
</reference>
<organism>
    <name type="scientific">Rattus norvegicus</name>
    <name type="common">Rat</name>
    <dbReference type="NCBI Taxonomy" id="10116"/>
    <lineage>
        <taxon>Eukaryota</taxon>
        <taxon>Metazoa</taxon>
        <taxon>Chordata</taxon>
        <taxon>Craniata</taxon>
        <taxon>Vertebrata</taxon>
        <taxon>Euteleostomi</taxon>
        <taxon>Mammalia</taxon>
        <taxon>Eutheria</taxon>
        <taxon>Euarchontoglires</taxon>
        <taxon>Glires</taxon>
        <taxon>Rodentia</taxon>
        <taxon>Myomorpha</taxon>
        <taxon>Muroidea</taxon>
        <taxon>Muridae</taxon>
        <taxon>Murinae</taxon>
        <taxon>Rattus</taxon>
    </lineage>
</organism>
<accession>P56718</accession>
<proteinExistence type="evidence at transcript level"/>
<feature type="chain" id="PRO_0000069987" description="Orexin/Hypocretin receptor type 1">
    <location>
        <begin position="1"/>
        <end position="416"/>
    </location>
</feature>
<feature type="topological domain" description="Extracellular" evidence="1">
    <location>
        <begin position="1"/>
        <end position="46"/>
    </location>
</feature>
<feature type="transmembrane region" description="Helical; Name=1" evidence="1">
    <location>
        <begin position="47"/>
        <end position="67"/>
    </location>
</feature>
<feature type="topological domain" description="Cytoplasmic" evidence="1">
    <location>
        <begin position="68"/>
        <end position="82"/>
    </location>
</feature>
<feature type="transmembrane region" description="Helical; Name=2" evidence="1">
    <location>
        <begin position="83"/>
        <end position="105"/>
    </location>
</feature>
<feature type="topological domain" description="Extracellular" evidence="1">
    <location>
        <begin position="106"/>
        <end position="119"/>
    </location>
</feature>
<feature type="transmembrane region" description="Helical; Name=3" evidence="1">
    <location>
        <begin position="120"/>
        <end position="140"/>
    </location>
</feature>
<feature type="topological domain" description="Cytoplasmic" evidence="1">
    <location>
        <begin position="141"/>
        <end position="160"/>
    </location>
</feature>
<feature type="transmembrane region" description="Helical; Name=4" evidence="1">
    <location>
        <begin position="161"/>
        <end position="182"/>
    </location>
</feature>
<feature type="topological domain" description="Extracellular" evidence="1">
    <location>
        <begin position="183"/>
        <end position="213"/>
    </location>
</feature>
<feature type="transmembrane region" description="Helical; Name=5" evidence="1">
    <location>
        <begin position="214"/>
        <end position="235"/>
    </location>
</feature>
<feature type="topological domain" description="Cytoplasmic" evidence="1">
    <location>
        <begin position="236"/>
        <end position="298"/>
    </location>
</feature>
<feature type="transmembrane region" description="Helical; Name=6" evidence="1">
    <location>
        <begin position="299"/>
        <end position="321"/>
    </location>
</feature>
<feature type="topological domain" description="Extracellular" evidence="1">
    <location>
        <begin position="322"/>
        <end position="336"/>
    </location>
</feature>
<feature type="transmembrane region" description="Helical; Name=7" evidence="1">
    <location>
        <begin position="337"/>
        <end position="360"/>
    </location>
</feature>
<feature type="topological domain" description="Cytoplasmic" evidence="1">
    <location>
        <begin position="361"/>
        <end position="416"/>
    </location>
</feature>
<feature type="region of interest" description="Disordered" evidence="4">
    <location>
        <begin position="1"/>
        <end position="22"/>
    </location>
</feature>
<feature type="region of interest" description="Required for response to orexin-A" evidence="1">
    <location>
        <begin position="26"/>
        <end position="41"/>
    </location>
</feature>
<feature type="site" description="Important for responses to orexin" evidence="1">
    <location>
        <position position="36"/>
    </location>
</feature>
<feature type="glycosylation site" description="N-linked (GlcNAc...) asparagine" evidence="2">
    <location>
        <position position="194"/>
    </location>
</feature>
<feature type="disulfide bond" evidence="1">
    <location>
        <begin position="119"/>
        <end position="202"/>
    </location>
</feature>
<dbReference type="EMBL" id="AF041244">
    <property type="protein sequence ID" value="AAC40041.1"/>
    <property type="molecule type" value="mRNA"/>
</dbReference>
<dbReference type="RefSeq" id="NP_037196.1">
    <property type="nucleotide sequence ID" value="NM_013064.2"/>
</dbReference>
<dbReference type="RefSeq" id="XP_038965249.1">
    <property type="nucleotide sequence ID" value="XM_039109321.2"/>
</dbReference>
<dbReference type="SMR" id="P56718"/>
<dbReference type="FunCoup" id="P56718">
    <property type="interactions" value="101"/>
</dbReference>
<dbReference type="STRING" id="10116.ENSRNOP00000018674"/>
<dbReference type="BindingDB" id="P56718"/>
<dbReference type="ChEMBL" id="CHEMBL1075232"/>
<dbReference type="GuidetoPHARMACOLOGY" id="321"/>
<dbReference type="GlyCosmos" id="P56718">
    <property type="glycosylation" value="1 site, No reported glycans"/>
</dbReference>
<dbReference type="GlyGen" id="P56718">
    <property type="glycosylation" value="2 sites"/>
</dbReference>
<dbReference type="PhosphoSitePlus" id="P56718"/>
<dbReference type="PaxDb" id="10116-ENSRNOP00000018674"/>
<dbReference type="DNASU" id="25593"/>
<dbReference type="Ensembl" id="ENSRNOT00000018674.7">
    <property type="protein sequence ID" value="ENSRNOP00000018674.3"/>
    <property type="gene ID" value="ENSRNOG00000013838.7"/>
</dbReference>
<dbReference type="GeneID" id="25593"/>
<dbReference type="KEGG" id="rno:25593"/>
<dbReference type="AGR" id="RGD:2787"/>
<dbReference type="CTD" id="3061"/>
<dbReference type="RGD" id="2787">
    <property type="gene designation" value="Hcrtr1"/>
</dbReference>
<dbReference type="eggNOG" id="KOG3656">
    <property type="taxonomic scope" value="Eukaryota"/>
</dbReference>
<dbReference type="GeneTree" id="ENSGT01130000278294"/>
<dbReference type="HOGENOM" id="CLU_009579_6_3_1"/>
<dbReference type="InParanoid" id="P56718"/>
<dbReference type="OMA" id="HTLCKVI"/>
<dbReference type="OrthoDB" id="9986530at2759"/>
<dbReference type="PhylomeDB" id="P56718"/>
<dbReference type="TreeFam" id="TF315303"/>
<dbReference type="Reactome" id="R-RNO-389397">
    <property type="pathway name" value="Orexin and neuropeptides FF and QRFP bind to their respective receptors"/>
</dbReference>
<dbReference type="Reactome" id="R-RNO-416476">
    <property type="pathway name" value="G alpha (q) signalling events"/>
</dbReference>
<dbReference type="PRO" id="PR:P56718"/>
<dbReference type="Proteomes" id="UP000002494">
    <property type="component" value="Chromosome 5"/>
</dbReference>
<dbReference type="Bgee" id="ENSRNOG00000013838">
    <property type="expression patterns" value="Expressed in brain and 3 other cell types or tissues"/>
</dbReference>
<dbReference type="GO" id="GO:0005886">
    <property type="term" value="C:plasma membrane"/>
    <property type="evidence" value="ECO:0000250"/>
    <property type="project" value="UniProtKB"/>
</dbReference>
<dbReference type="GO" id="GO:0004930">
    <property type="term" value="F:G protein-coupled receptor activity"/>
    <property type="evidence" value="ECO:0000318"/>
    <property type="project" value="GO_Central"/>
</dbReference>
<dbReference type="GO" id="GO:0016499">
    <property type="term" value="F:orexin receptor activity"/>
    <property type="evidence" value="ECO:0000314"/>
    <property type="project" value="RGD"/>
</dbReference>
<dbReference type="GO" id="GO:0017046">
    <property type="term" value="F:peptide hormone binding"/>
    <property type="evidence" value="ECO:0000314"/>
    <property type="project" value="RGD"/>
</dbReference>
<dbReference type="GO" id="GO:0032870">
    <property type="term" value="P:cellular response to hormone stimulus"/>
    <property type="evidence" value="ECO:0000318"/>
    <property type="project" value="GO_Central"/>
</dbReference>
<dbReference type="GO" id="GO:0007631">
    <property type="term" value="P:feeding behavior"/>
    <property type="evidence" value="ECO:0007669"/>
    <property type="project" value="InterPro"/>
</dbReference>
<dbReference type="GO" id="GO:0007186">
    <property type="term" value="P:G protein-coupled receptor signaling pathway"/>
    <property type="evidence" value="ECO:0000314"/>
    <property type="project" value="RGD"/>
</dbReference>
<dbReference type="GO" id="GO:0007218">
    <property type="term" value="P:neuropeptide signaling pathway"/>
    <property type="evidence" value="ECO:0000314"/>
    <property type="project" value="RGD"/>
</dbReference>
<dbReference type="GO" id="GO:0070374">
    <property type="term" value="P:positive regulation of ERK1 and ERK2 cascade"/>
    <property type="evidence" value="ECO:0000266"/>
    <property type="project" value="RGD"/>
</dbReference>
<dbReference type="GO" id="GO:0051480">
    <property type="term" value="P:regulation of cytosolic calcium ion concentration"/>
    <property type="evidence" value="ECO:0000250"/>
    <property type="project" value="UniProtKB"/>
</dbReference>
<dbReference type="CDD" id="cd15208">
    <property type="entry name" value="7tmA_OXR"/>
    <property type="match status" value="1"/>
</dbReference>
<dbReference type="FunFam" id="1.20.1070.10:FF:000075">
    <property type="entry name" value="orexin receptor type 2"/>
    <property type="match status" value="1"/>
</dbReference>
<dbReference type="Gene3D" id="1.20.1070.10">
    <property type="entry name" value="Rhodopsin 7-helix transmembrane proteins"/>
    <property type="match status" value="1"/>
</dbReference>
<dbReference type="InterPro" id="IPR000276">
    <property type="entry name" value="GPCR_Rhodpsn"/>
</dbReference>
<dbReference type="InterPro" id="IPR017452">
    <property type="entry name" value="GPCR_Rhodpsn_7TM"/>
</dbReference>
<dbReference type="InterPro" id="IPR000204">
    <property type="entry name" value="Orexin_rcpt"/>
</dbReference>
<dbReference type="InterPro" id="IPR004059">
    <property type="entry name" value="OX1R"/>
</dbReference>
<dbReference type="PANTHER" id="PTHR45695:SF32">
    <property type="entry name" value="G PROTEIN-COUPLED RECEPTOR 15-LIKE"/>
    <property type="match status" value="1"/>
</dbReference>
<dbReference type="PANTHER" id="PTHR45695">
    <property type="entry name" value="LEUCOKININ RECEPTOR-RELATED"/>
    <property type="match status" value="1"/>
</dbReference>
<dbReference type="Pfam" id="PF00001">
    <property type="entry name" value="7tm_1"/>
    <property type="match status" value="1"/>
</dbReference>
<dbReference type="PRINTS" id="PR00237">
    <property type="entry name" value="GPCRRHODOPSN"/>
</dbReference>
<dbReference type="PRINTS" id="PR01521">
    <property type="entry name" value="OREXIN1R"/>
</dbReference>
<dbReference type="PRINTS" id="PR01064">
    <property type="entry name" value="OREXINR"/>
</dbReference>
<dbReference type="SMART" id="SM01381">
    <property type="entry name" value="7TM_GPCR_Srsx"/>
    <property type="match status" value="1"/>
</dbReference>
<dbReference type="SUPFAM" id="SSF81321">
    <property type="entry name" value="Family A G protein-coupled receptor-like"/>
    <property type="match status" value="1"/>
</dbReference>
<dbReference type="PROSITE" id="PS00237">
    <property type="entry name" value="G_PROTEIN_RECEP_F1_1"/>
    <property type="match status" value="1"/>
</dbReference>
<dbReference type="PROSITE" id="PS50262">
    <property type="entry name" value="G_PROTEIN_RECEP_F1_2"/>
    <property type="match status" value="1"/>
</dbReference>
<keyword id="KW-1003">Cell membrane</keyword>
<keyword id="KW-1015">Disulfide bond</keyword>
<keyword id="KW-0297">G-protein coupled receptor</keyword>
<keyword id="KW-0325">Glycoprotein</keyword>
<keyword id="KW-0472">Membrane</keyword>
<keyword id="KW-0675">Receptor</keyword>
<keyword id="KW-1185">Reference proteome</keyword>
<keyword id="KW-0807">Transducer</keyword>
<keyword id="KW-0812">Transmembrane</keyword>
<keyword id="KW-1133">Transmembrane helix</keyword>
<comment type="function">
    <text evidence="1">Moderately selective excitatory receptor for orexin-A and, with a lower affinity, for orexin-B neuropeptide. Triggers an increase in cytoplasmic Ca(2+) levels in response to orexin-A binding.</text>
</comment>
<comment type="subcellular location">
    <subcellularLocation>
        <location evidence="1">Cell membrane</location>
        <topology evidence="1">Multi-pass membrane protein</topology>
    </subcellularLocation>
</comment>
<comment type="tissue specificity">
    <text evidence="5">Highly expressed in the brain in the prefrontal cortex, hippocampus, paraventricular thalamus, ventromedial hypothalamus, arcuate nucleus, dorsal raphe nucleus, and locus coeruleus. Not detected in the spleen, lung, liver, skeletal muscle, kidney and testis. Orexin receptor mRNA expression has also been reported in the adrenal gland, enteric nervous system, and pancreas.</text>
</comment>
<comment type="induction">
    <text evidence="5">By nutritional state, up-regulated by fasting.</text>
</comment>
<comment type="domain">
    <text evidence="1">The N-terminal region is required for orexin signaling.</text>
</comment>
<comment type="similarity">
    <text evidence="3">Belongs to the G-protein coupled receptor 1 family.</text>
</comment>
<name>OX1R_RAT</name>
<gene>
    <name evidence="8" type="primary">Hcrtr1</name>
</gene>
<protein>
    <recommendedName>
        <fullName evidence="6">Orexin/Hypocretin receptor type 1</fullName>
    </recommendedName>
    <alternativeName>
        <fullName evidence="8">Hypocretin receptor type 1</fullName>
    </alternativeName>
    <alternativeName>
        <fullName evidence="7">Orexin receptor type 1</fullName>
        <shortName>Ox-1-R</shortName>
        <shortName>Ox1-R</shortName>
        <shortName>Ox1R</shortName>
    </alternativeName>
</protein>